<keyword id="KW-0040">ANK repeat</keyword>
<keyword id="KW-1185">Reference proteome</keyword>
<keyword id="KW-0677">Repeat</keyword>
<name>YR810_MIMIV</name>
<organism>
    <name type="scientific">Acanthamoeba polyphaga mimivirus</name>
    <name type="common">APMV</name>
    <dbReference type="NCBI Taxonomy" id="212035"/>
    <lineage>
        <taxon>Viruses</taxon>
        <taxon>Varidnaviria</taxon>
        <taxon>Bamfordvirae</taxon>
        <taxon>Nucleocytoviricota</taxon>
        <taxon>Megaviricetes</taxon>
        <taxon>Imitervirales</taxon>
        <taxon>Mimiviridae</taxon>
        <taxon>Megamimivirinae</taxon>
        <taxon>Mimivirus</taxon>
        <taxon>Mimivirus bradfordmassiliense</taxon>
    </lineage>
</organism>
<accession>Q5UQ36</accession>
<feature type="chain" id="PRO_0000067204" description="Putative ankyrin repeat protein R810">
    <location>
        <begin position="1"/>
        <end position="211"/>
    </location>
</feature>
<feature type="repeat" description="ANK 1">
    <location>
        <begin position="31"/>
        <end position="61"/>
    </location>
</feature>
<feature type="repeat" description="ANK 2">
    <location>
        <begin position="72"/>
        <end position="101"/>
    </location>
</feature>
<feature type="repeat" description="ANK 3">
    <location>
        <begin position="103"/>
        <end position="131"/>
    </location>
</feature>
<feature type="repeat" description="ANK 4">
    <location>
        <begin position="133"/>
        <end position="162"/>
    </location>
</feature>
<feature type="repeat" description="ANK 5">
    <location>
        <begin position="163"/>
        <end position="191"/>
    </location>
</feature>
<protein>
    <recommendedName>
        <fullName>Putative ankyrin repeat protein R810</fullName>
    </recommendedName>
</protein>
<organismHost>
    <name type="scientific">Acanthamoeba polyphaga</name>
    <name type="common">Amoeba</name>
    <dbReference type="NCBI Taxonomy" id="5757"/>
</organismHost>
<proteinExistence type="predicted"/>
<gene>
    <name type="ordered locus">MIMI_R810</name>
</gene>
<dbReference type="EMBL" id="AY653733">
    <property type="protein sequence ID" value="AAV51070.1"/>
    <property type="molecule type" value="Genomic_DNA"/>
</dbReference>
<dbReference type="SMR" id="Q5UQ36"/>
<dbReference type="KEGG" id="vg:9925473"/>
<dbReference type="OrthoDB" id="8173at10239"/>
<dbReference type="Proteomes" id="UP000001134">
    <property type="component" value="Genome"/>
</dbReference>
<dbReference type="Gene3D" id="1.25.40.20">
    <property type="entry name" value="Ankyrin repeat-containing domain"/>
    <property type="match status" value="1"/>
</dbReference>
<dbReference type="InterPro" id="IPR002110">
    <property type="entry name" value="Ankyrin_rpt"/>
</dbReference>
<dbReference type="InterPro" id="IPR036770">
    <property type="entry name" value="Ankyrin_rpt-contain_sf"/>
</dbReference>
<dbReference type="PANTHER" id="PTHR24171:SF9">
    <property type="entry name" value="ANKYRIN REPEAT DOMAIN-CONTAINING PROTEIN 39"/>
    <property type="match status" value="1"/>
</dbReference>
<dbReference type="PANTHER" id="PTHR24171">
    <property type="entry name" value="ANKYRIN REPEAT DOMAIN-CONTAINING PROTEIN 39-RELATED"/>
    <property type="match status" value="1"/>
</dbReference>
<dbReference type="Pfam" id="PF12796">
    <property type="entry name" value="Ank_2"/>
    <property type="match status" value="1"/>
</dbReference>
<dbReference type="SMART" id="SM00248">
    <property type="entry name" value="ANK"/>
    <property type="match status" value="4"/>
</dbReference>
<dbReference type="SUPFAM" id="SSF48403">
    <property type="entry name" value="Ankyrin repeat"/>
    <property type="match status" value="1"/>
</dbReference>
<dbReference type="PROSITE" id="PS50297">
    <property type="entry name" value="ANK_REP_REGION"/>
    <property type="match status" value="1"/>
</dbReference>
<dbReference type="PROSITE" id="PS50088">
    <property type="entry name" value="ANK_REPEAT"/>
    <property type="match status" value="2"/>
</dbReference>
<sequence length="211" mass="24157">MVCDIYDALPVEIWIHIIELSKEFNLLLTNTKFIKLYYLVKTHKSILKKIVKNGYFENLKYIIENRIIVITNINDVLLLACKYGNLPIVKYLVSKGADICAEQNSPIKNATYYGHLDVVKYLVSNGAKFFGSYSSAIIIASSSGKLDIVKYFVPGKIYFCLEMEIALVCATENKHTNIVDYLNSMRSSYFDKCFNFIACLVKNFLPSIYVY</sequence>
<reference key="1">
    <citation type="journal article" date="2004" name="Science">
        <title>The 1.2-megabase genome sequence of Mimivirus.</title>
        <authorList>
            <person name="Raoult D."/>
            <person name="Audic S."/>
            <person name="Robert C."/>
            <person name="Abergel C."/>
            <person name="Renesto P."/>
            <person name="Ogata H."/>
            <person name="La Scola B."/>
            <person name="Susan M."/>
            <person name="Claverie J.-M."/>
        </authorList>
    </citation>
    <scope>NUCLEOTIDE SEQUENCE [LARGE SCALE GENOMIC DNA]</scope>
    <source>
        <strain>Rowbotham-Bradford</strain>
    </source>
</reference>